<keyword id="KW-0002">3D-structure</keyword>
<keyword id="KW-0903">Direct protein sequencing</keyword>
<keyword id="KW-1015">Disulfide bond</keyword>
<keyword id="KW-0325">Glycoprotein</keyword>
<keyword id="KW-0379">Hydroxylation</keyword>
<keyword id="KW-0872">Ion channel impairing toxin</keyword>
<keyword id="KW-0528">Neurotoxin</keyword>
<keyword id="KW-0638">Presynaptic neurotoxin</keyword>
<keyword id="KW-0964">Secreted</keyword>
<keyword id="KW-0800">Toxin</keyword>
<keyword id="KW-0738">Voltage-gated sodium channel impairing toxin</keyword>
<feature type="peptide" id="PRO_0000044514" description="Conotoxin CcTx">
    <location>
        <begin position="1"/>
        <end position="30"/>
    </location>
</feature>
<feature type="modified residue" description="4-hydroxyproline" evidence="1">
    <location>
        <position position="2"/>
    </location>
</feature>
<feature type="modified residue" description="4-hydroxyproline" evidence="1">
    <location>
        <position position="17"/>
    </location>
</feature>
<feature type="modified residue" description="4-hydroxyproline" evidence="1">
    <location>
        <position position="22"/>
    </location>
</feature>
<feature type="glycosylation site" description="O-linked (HexNAc...) serine" evidence="2 3">
    <location>
        <position position="7"/>
    </location>
</feature>
<feature type="disulfide bond" evidence="3 5">
    <location>
        <begin position="12"/>
        <end position="21"/>
    </location>
</feature>
<feature type="disulfide bond" evidence="3 5">
    <location>
        <begin position="13"/>
        <end position="26"/>
    </location>
</feature>
<feature type="disulfide bond" evidence="3 5">
    <location>
        <begin position="24"/>
        <end position="30"/>
    </location>
</feature>
<feature type="helix" evidence="6">
    <location>
        <begin position="23"/>
        <end position="26"/>
    </location>
</feature>
<comment type="function">
    <text evidence="1">May specifically activate neuronal voltage-gated sodium channels (Nav) at the resting membrane potential. Causes a marked contraction and extension of the caudal and dorsal fins in fish and noticeable spontaneous contractions of isolated frog neuromuscular preparations.</text>
</comment>
<comment type="subcellular location">
    <subcellularLocation>
        <location evidence="1">Secreted</location>
    </subcellularLocation>
</comment>
<comment type="tissue specificity">
    <text evidence="1">Expressed by the venom duct.</text>
</comment>
<comment type="domain">
    <text>The cysteine framework is IV (CC-C-C-C-C).</text>
</comment>
<comment type="PTM">
    <text evidence="3">O-glycosylated at Ser-7 by a core type 9 glycan, containing both D- and L-galactose units (alpha-L-Galp-(1-&gt;4)-alpha-D- GlcpNAc-(1-&gt;6)-[alpha-L-Galp-(1-&gt;2)-bets-D-Galp-(1-&gt;3)-]alpha-D-GalpNAc-(1-&gt;O)).</text>
</comment>
<comment type="mass spectrometry" mass="3223.0" method="Electrospray" evidence="3">
    <text>Non-glycosylated form.</text>
</comment>
<comment type="mass spectrometry" mass="4156.0" method="Electrospray" evidence="1">
    <text>Glycosylated form.</text>
</comment>
<comment type="miscellaneous">
    <text evidence="4">Found in both injectable (milked) (IV) and dissected venom (DV).</text>
</comment>
<reference key="1">
    <citation type="journal article" date="1999" name="Eur. J. Neurosci.">
        <title>A new conotoxin isolated from Conus consors venom acting selectively on axons and motor nerve terminals through a Na+-dependent mechanism.</title>
        <authorList>
            <person name="Le Gall F."/>
            <person name="Favreau P."/>
            <person name="Benoit E."/>
            <person name="Mattei C."/>
            <person name="Bouet F."/>
            <person name="Menou J.-L."/>
            <person name="Menez A."/>
            <person name="Letourneux Y."/>
            <person name="Molgo J."/>
        </authorList>
    </citation>
    <scope>PROTEIN SEQUENCE</scope>
    <scope>FUNCTION</scope>
    <scope>HYDROXYLATION AT PRO-2; PRO-17 AND PRO-22</scope>
    <scope>MASS SPECTROMETRY</scope>
    <source>
        <tissue>Venom</tissue>
    </source>
</reference>
<reference key="2">
    <citation type="journal article" date="2009" name="J. Proteomics">
        <title>Comparative proteomic study of the venom of the piscivorous cone snail Conus consors.</title>
        <authorList>
            <person name="Biass D."/>
            <person name="Dutertre S."/>
            <person name="Gerbault A."/>
            <person name="Menou J.L."/>
            <person name="Offord R."/>
            <person name="Favreau P."/>
            <person name="Stocklin R."/>
        </authorList>
    </citation>
    <scope>SEQUENCE REVISION TO 7</scope>
    <scope>GLYCOSYLATION AT SER-7</scope>
</reference>
<reference key="3">
    <citation type="journal article" date="2012" name="J. Proteomics">
        <title>Large-scale discovery of conopeptides and conoproteins in the injectable venom of a fish-hunting cone snail using a combined proteomic and transcriptomic approach.</title>
        <authorList>
            <person name="Violette A."/>
            <person name="Biass D."/>
            <person name="Dutertre S."/>
            <person name="Koua D."/>
            <person name="Piquemal D."/>
            <person name="Pierrat F."/>
            <person name="Stocklin R."/>
            <person name="Favreau P."/>
        </authorList>
    </citation>
    <scope>IDENTIFICATION BY MASS SPECTROMETRY OF GLYCOSYLATED AND NON-GLYCOSYLATED FORMS</scope>
    <source>
        <tissue>Venom</tissue>
    </source>
</reference>
<reference evidence="5" key="4">
    <citation type="journal article" date="2013" name="Chemistry">
        <title>Structure of the O-glycosylated conopeptide CcTx from Conus consors venom.</title>
        <authorList>
            <person name="Hocking H.G."/>
            <person name="Gerwig G.J."/>
            <person name="Dutertre S."/>
            <person name="Violette A."/>
            <person name="Favreau P."/>
            <person name="Stocklin R."/>
            <person name="Kamerling J.P."/>
            <person name="Boelens R."/>
        </authorList>
    </citation>
    <scope>STRUCTURE BY NMR</scope>
    <scope>MASS SPECTROMETRY</scope>
    <scope>DISULFIDE BONDS</scope>
    <scope>GLYCOSYLATION AT SER-7</scope>
</reference>
<dbReference type="PDB" id="4B1Q">
    <property type="method" value="NMR"/>
    <property type="chains" value="P=1-30"/>
</dbReference>
<dbReference type="PDBsum" id="4B1Q"/>
<dbReference type="BMRB" id="P58928"/>
<dbReference type="SMR" id="P58928"/>
<dbReference type="iPTMnet" id="P58928"/>
<dbReference type="ConoServer" id="1510">
    <property type="toxin name" value="CcTx"/>
</dbReference>
<dbReference type="EvolutionaryTrace" id="P58928"/>
<dbReference type="GO" id="GO:0005576">
    <property type="term" value="C:extracellular region"/>
    <property type="evidence" value="ECO:0007669"/>
    <property type="project" value="UniProtKB-SubCell"/>
</dbReference>
<dbReference type="GO" id="GO:0044231">
    <property type="term" value="C:host cell presynaptic membrane"/>
    <property type="evidence" value="ECO:0007669"/>
    <property type="project" value="UniProtKB-KW"/>
</dbReference>
<dbReference type="GO" id="GO:0017080">
    <property type="term" value="F:sodium channel regulator activity"/>
    <property type="evidence" value="ECO:0007669"/>
    <property type="project" value="UniProtKB-KW"/>
</dbReference>
<dbReference type="GO" id="GO:0090729">
    <property type="term" value="F:toxin activity"/>
    <property type="evidence" value="ECO:0007669"/>
    <property type="project" value="UniProtKB-KW"/>
</dbReference>
<accession>P58928</accession>
<organism>
    <name type="scientific">Conus consors</name>
    <name type="common">Singed cone</name>
    <dbReference type="NCBI Taxonomy" id="101297"/>
    <lineage>
        <taxon>Eukaryota</taxon>
        <taxon>Metazoa</taxon>
        <taxon>Spiralia</taxon>
        <taxon>Lophotrochozoa</taxon>
        <taxon>Mollusca</taxon>
        <taxon>Gastropoda</taxon>
        <taxon>Caenogastropoda</taxon>
        <taxon>Neogastropoda</taxon>
        <taxon>Conoidea</taxon>
        <taxon>Conidae</taxon>
        <taxon>Conus</taxon>
        <taxon>Pionoconus</taxon>
    </lineage>
</organism>
<protein>
    <recommendedName>
        <fullName>Conotoxin CcTx</fullName>
    </recommendedName>
    <alternativeName>
        <fullName>Excitotoxin CcTx</fullName>
    </alternativeName>
</protein>
<proteinExistence type="evidence at protein level"/>
<evidence type="ECO:0000269" key="1">
    <source>
    </source>
</evidence>
<evidence type="ECO:0000269" key="2">
    <source>
    </source>
</evidence>
<evidence type="ECO:0000269" key="3">
    <source>
    </source>
</evidence>
<evidence type="ECO:0000305" key="4">
    <source>
    </source>
</evidence>
<evidence type="ECO:0007744" key="5">
    <source>
        <dbReference type="PDB" id="4B1Q"/>
    </source>
</evidence>
<evidence type="ECO:0007829" key="6">
    <source>
        <dbReference type="PDB" id="4B1Q"/>
    </source>
</evidence>
<sequence length="30" mass="3184">APWLVPSQITTCCGYNPGTMCPSCMCTNTC</sequence>
<name>CEX_CONCN</name>